<name>RECA_BACSU</name>
<feature type="chain" id="PRO_0000122656" description="Protein RecA">
    <location>
        <begin position="1"/>
        <end position="348"/>
    </location>
</feature>
<feature type="binding site" evidence="1">
    <location>
        <begin position="64"/>
        <end position="71"/>
    </location>
    <ligand>
        <name>ATP</name>
        <dbReference type="ChEBI" id="CHEBI:30616"/>
    </ligand>
</feature>
<feature type="sequence conflict" description="In Ref. 1; CAA36377 and 4; AAB47709." evidence="15" ref="1 4">
    <original>GGQA</original>
    <variation>RTS</variation>
    <location>
        <begin position="85"/>
        <end position="88"/>
    </location>
</feature>
<proteinExistence type="evidence at protein level"/>
<evidence type="ECO:0000255" key="1">
    <source>
        <dbReference type="HAMAP-Rule" id="MF_00268"/>
    </source>
</evidence>
<evidence type="ECO:0000269" key="2">
    <source>
    </source>
</evidence>
<evidence type="ECO:0000269" key="3">
    <source>
    </source>
</evidence>
<evidence type="ECO:0000269" key="4">
    <source>
    </source>
</evidence>
<evidence type="ECO:0000269" key="5">
    <source>
    </source>
</evidence>
<evidence type="ECO:0000269" key="6">
    <source>
    </source>
</evidence>
<evidence type="ECO:0000269" key="7">
    <source>
    </source>
</evidence>
<evidence type="ECO:0000269" key="8">
    <source>
    </source>
</evidence>
<evidence type="ECO:0000269" key="9">
    <source>
    </source>
</evidence>
<evidence type="ECO:0000269" key="10">
    <source>
    </source>
</evidence>
<evidence type="ECO:0000269" key="11">
    <source>
    </source>
</evidence>
<evidence type="ECO:0000269" key="12">
    <source>
    </source>
</evidence>
<evidence type="ECO:0000303" key="13">
    <source>
    </source>
</evidence>
<evidence type="ECO:0000303" key="14">
    <source>
    </source>
</evidence>
<evidence type="ECO:0000305" key="15"/>
<evidence type="ECO:0000305" key="16">
    <source>
    </source>
</evidence>
<reference key="1">
    <citation type="journal article" date="1990" name="Nucleic Acids Res.">
        <title>The nucleotide sequence of the recE+ gene of Bacillus subtilis.</title>
        <authorList>
            <person name="Stranathan M.C."/>
            <person name="Bayles K.W."/>
            <person name="Yasbin R.E."/>
        </authorList>
    </citation>
    <scope>NUCLEOTIDE SEQUENCE [GENOMIC DNA]</scope>
    <source>
        <strain>168 / YB886 / BG214</strain>
    </source>
</reference>
<reference key="2">
    <citation type="journal article" date="1997" name="Nature">
        <title>The complete genome sequence of the Gram-positive bacterium Bacillus subtilis.</title>
        <authorList>
            <person name="Kunst F."/>
            <person name="Ogasawara N."/>
            <person name="Moszer I."/>
            <person name="Albertini A.M."/>
            <person name="Alloni G."/>
            <person name="Azevedo V."/>
            <person name="Bertero M.G."/>
            <person name="Bessieres P."/>
            <person name="Bolotin A."/>
            <person name="Borchert S."/>
            <person name="Borriss R."/>
            <person name="Boursier L."/>
            <person name="Brans A."/>
            <person name="Braun M."/>
            <person name="Brignell S.C."/>
            <person name="Bron S."/>
            <person name="Brouillet S."/>
            <person name="Bruschi C.V."/>
            <person name="Caldwell B."/>
            <person name="Capuano V."/>
            <person name="Carter N.M."/>
            <person name="Choi S.-K."/>
            <person name="Codani J.-J."/>
            <person name="Connerton I.F."/>
            <person name="Cummings N.J."/>
            <person name="Daniel R.A."/>
            <person name="Denizot F."/>
            <person name="Devine K.M."/>
            <person name="Duesterhoeft A."/>
            <person name="Ehrlich S.D."/>
            <person name="Emmerson P.T."/>
            <person name="Entian K.-D."/>
            <person name="Errington J."/>
            <person name="Fabret C."/>
            <person name="Ferrari E."/>
            <person name="Foulger D."/>
            <person name="Fritz C."/>
            <person name="Fujita M."/>
            <person name="Fujita Y."/>
            <person name="Fuma S."/>
            <person name="Galizzi A."/>
            <person name="Galleron N."/>
            <person name="Ghim S.-Y."/>
            <person name="Glaser P."/>
            <person name="Goffeau A."/>
            <person name="Golightly E.J."/>
            <person name="Grandi G."/>
            <person name="Guiseppi G."/>
            <person name="Guy B.J."/>
            <person name="Haga K."/>
            <person name="Haiech J."/>
            <person name="Harwood C.R."/>
            <person name="Henaut A."/>
            <person name="Hilbert H."/>
            <person name="Holsappel S."/>
            <person name="Hosono S."/>
            <person name="Hullo M.-F."/>
            <person name="Itaya M."/>
            <person name="Jones L.-M."/>
            <person name="Joris B."/>
            <person name="Karamata D."/>
            <person name="Kasahara Y."/>
            <person name="Klaerr-Blanchard M."/>
            <person name="Klein C."/>
            <person name="Kobayashi Y."/>
            <person name="Koetter P."/>
            <person name="Koningstein G."/>
            <person name="Krogh S."/>
            <person name="Kumano M."/>
            <person name="Kurita K."/>
            <person name="Lapidus A."/>
            <person name="Lardinois S."/>
            <person name="Lauber J."/>
            <person name="Lazarevic V."/>
            <person name="Lee S.-M."/>
            <person name="Levine A."/>
            <person name="Liu H."/>
            <person name="Masuda S."/>
            <person name="Mauel C."/>
            <person name="Medigue C."/>
            <person name="Medina N."/>
            <person name="Mellado R.P."/>
            <person name="Mizuno M."/>
            <person name="Moestl D."/>
            <person name="Nakai S."/>
            <person name="Noback M."/>
            <person name="Noone D."/>
            <person name="O'Reilly M."/>
            <person name="Ogawa K."/>
            <person name="Ogiwara A."/>
            <person name="Oudega B."/>
            <person name="Park S.-H."/>
            <person name="Parro V."/>
            <person name="Pohl T.M."/>
            <person name="Portetelle D."/>
            <person name="Porwollik S."/>
            <person name="Prescott A.M."/>
            <person name="Presecan E."/>
            <person name="Pujic P."/>
            <person name="Purnelle B."/>
            <person name="Rapoport G."/>
            <person name="Rey M."/>
            <person name="Reynolds S."/>
            <person name="Rieger M."/>
            <person name="Rivolta C."/>
            <person name="Rocha E."/>
            <person name="Roche B."/>
            <person name="Rose M."/>
            <person name="Sadaie Y."/>
            <person name="Sato T."/>
            <person name="Scanlan E."/>
            <person name="Schleich S."/>
            <person name="Schroeter R."/>
            <person name="Scoffone F."/>
            <person name="Sekiguchi J."/>
            <person name="Sekowska A."/>
            <person name="Seror S.J."/>
            <person name="Serror P."/>
            <person name="Shin B.-S."/>
            <person name="Soldo B."/>
            <person name="Sorokin A."/>
            <person name="Tacconi E."/>
            <person name="Takagi T."/>
            <person name="Takahashi H."/>
            <person name="Takemaru K."/>
            <person name="Takeuchi M."/>
            <person name="Tamakoshi A."/>
            <person name="Tanaka T."/>
            <person name="Terpstra P."/>
            <person name="Tognoni A."/>
            <person name="Tosato V."/>
            <person name="Uchiyama S."/>
            <person name="Vandenbol M."/>
            <person name="Vannier F."/>
            <person name="Vassarotti A."/>
            <person name="Viari A."/>
            <person name="Wambutt R."/>
            <person name="Wedler E."/>
            <person name="Wedler H."/>
            <person name="Weitzenegger T."/>
            <person name="Winters P."/>
            <person name="Wipat A."/>
            <person name="Yamamoto H."/>
            <person name="Yamane K."/>
            <person name="Yasumoto K."/>
            <person name="Yata K."/>
            <person name="Yoshida K."/>
            <person name="Yoshikawa H.-F."/>
            <person name="Zumstein E."/>
            <person name="Yoshikawa H."/>
            <person name="Danchin A."/>
        </authorList>
    </citation>
    <scope>NUCLEOTIDE SEQUENCE [LARGE SCALE GENOMIC DNA]</scope>
    <source>
        <strain>168</strain>
    </source>
</reference>
<reference key="3">
    <citation type="journal article" date="2009" name="Microbiology">
        <title>From a consortium sequence to a unified sequence: the Bacillus subtilis 168 reference genome a decade later.</title>
        <authorList>
            <person name="Barbe V."/>
            <person name="Cruveiller S."/>
            <person name="Kunst F."/>
            <person name="Lenoble P."/>
            <person name="Meurice G."/>
            <person name="Sekowska A."/>
            <person name="Vallenet D."/>
            <person name="Wang T."/>
            <person name="Moszer I."/>
            <person name="Medigue C."/>
            <person name="Danchin A."/>
        </authorList>
    </citation>
    <scope>SEQUENCE REVISION TO 85-88</scope>
</reference>
<reference key="4">
    <citation type="submission" date="1997-02" db="EMBL/GenBank/DDBJ databases">
        <title>Cloning of a putative mdr gene from Bacillus subtilis.</title>
        <authorList>
            <person name="de Rossi E."/>
        </authorList>
    </citation>
    <scope>NUCLEOTIDE SEQUENCE [GENOMIC DNA] OF 1-281</scope>
    <source>
        <strain>PB1831</strain>
    </source>
</reference>
<reference key="5">
    <citation type="submission" date="1996-05" db="EMBL/GenBank/DDBJ databases">
        <title>The genetic organisation of the recA chromosomal region in Bacillus subtilis.</title>
        <authorList>
            <person name="Albertini A."/>
            <person name="Caldwell B."/>
            <person name="Caramori T."/>
            <person name="Errington J."/>
            <person name="Foulger D."/>
            <person name="Thomaides H."/>
            <person name="Williams A."/>
        </authorList>
    </citation>
    <scope>NUCLEOTIDE SEQUENCE [GENOMIC DNA] OF 1-31</scope>
    <source>
        <strain>168</strain>
    </source>
</reference>
<reference key="6">
    <citation type="journal article" date="2002" name="J. Bacteriol.">
        <title>Whole-genome analysis of genes regulated by the Bacillus subtilis competence transcription factor ComK.</title>
        <authorList>
            <person name="Ogura M."/>
            <person name="Yamaguchi H."/>
            <person name="Kobayashi K."/>
            <person name="Ogasawara N."/>
            <person name="Fujita Y."/>
            <person name="Tanaka T."/>
        </authorList>
    </citation>
    <scope>DEVELOPMENTAL STAGE</scope>
    <scope>INDUCTION</scope>
    <source>
        <strain>168 / CU741</strain>
    </source>
</reference>
<reference key="7">
    <citation type="journal article" date="2005" name="J. Cell Biol.">
        <title>Dynamic formation of RecA filaments at DNA double strand break repair centers in live cells.</title>
        <authorList>
            <person name="Kidane D."/>
            <person name="Graumann P.L."/>
        </authorList>
    </citation>
    <scope>FUNCTION</scope>
    <scope>SUBUNIT</scope>
    <scope>SUBCELLULAR LOCATION</scope>
    <scope>RECRUITMENT TO DNA DOUBLE-STRAND BREAKS</scope>
    <source>
        <strain>168 / YB886 / BG214</strain>
    </source>
</reference>
<reference key="8">
    <citation type="journal article" date="2006" name="J. Bacteriol.">
        <title>Recruitment of Bacillus subtilis RecN to DNA double-strand breaks in the absence of DNA end processing.</title>
        <authorList>
            <person name="Sanchez H."/>
            <person name="Kidane D."/>
            <person name="Castillo Cozar M."/>
            <person name="Graumann P.L."/>
            <person name="Alonso J.C."/>
        </authorList>
    </citation>
    <scope>FUNCTION</scope>
    <scope>DISRUPTION PHENOTYPE</scope>
    <source>
        <strain>168 / YB886 / BG214</strain>
    </source>
</reference>
<reference key="9">
    <citation type="journal article" date="2007" name="Mol. Microbiol.">
        <title>Multiple interactions among the competence proteins of Bacillus subtilis.</title>
        <authorList>
            <person name="Kramer N."/>
            <person name="Hahn J."/>
            <person name="Dubnau D."/>
        </authorList>
    </citation>
    <scope>SUBCELLULAR LOCATION</scope>
    <source>
        <strain>168</strain>
    </source>
</reference>
<reference key="10">
    <citation type="journal article" date="2007" name="Cell">
        <title>A key presynaptic role in transformation for a widespread bacterial protein: DprA conveys incoming ssDNA to RecA.</title>
        <authorList>
            <person name="Mortier-Barriere I."/>
            <person name="Velten M."/>
            <person name="Dupaigne P."/>
            <person name="Mirouze N."/>
            <person name="Pietrement O."/>
            <person name="McGovern S."/>
            <person name="Fichant G."/>
            <person name="Martin B."/>
            <person name="Noirot P."/>
            <person name="Le Cam E."/>
            <person name="Polard P."/>
            <person name="Claverys J.P."/>
        </authorList>
    </citation>
    <scope>FUNCTION</scope>
    <scope>INTERACTION WITH DPRA</scope>
    <scope>SUBUNIT</scope>
    <source>
        <strain>168</strain>
    </source>
</reference>
<reference key="11">
    <citation type="journal article" date="2008" name="Nucleic Acids Res.">
        <title>The RecU Holliday junction resolvase acts at early stages of homologous recombination.</title>
        <authorList>
            <person name="Canas C."/>
            <person name="Carrasco B."/>
            <person name="Ayora S."/>
            <person name="Alonso J.C."/>
        </authorList>
    </citation>
    <scope>FUNCTION</scope>
    <scope>SUBUNIT</scope>
    <scope>MODULATION BY RECU</scope>
    <scope>INTERACTION WITH RECU</scope>
</reference>
<reference key="12">
    <citation type="journal article" date="2014" name="J. Biol. Chem.">
        <title>Roles of Bacillus subtilis DprA and SsbA in RecA-mediated genetic recombination.</title>
        <authorList>
            <person name="Yadav T."/>
            <person name="Carrasco B."/>
            <person name="Serrano E."/>
            <person name="Alonso J.C."/>
        </authorList>
    </citation>
    <scope>FUNCTION</scope>
</reference>
<reference key="13">
    <citation type="journal article" date="2019" name="DNA Repair">
        <title>Bacillus subtilis RarA acts at the interplay between replication and repair-by-recombination.</title>
        <authorList>
            <person name="Romero H."/>
            <person name="Torres R."/>
            <person name="Hernandez-Tamayo R."/>
            <person name="Carrasco B."/>
            <person name="Ayora S."/>
            <person name="Graumann P.L."/>
            <person name="Alonso J.C."/>
        </authorList>
    </citation>
    <scope>DISRUPTION PHENOTYPE</scope>
    <source>
        <strain>168 / YB886 / BG214</strain>
    </source>
</reference>
<reference key="14">
    <citation type="journal article" date="2020" name="Front. Microbiol.">
        <title>Bacillus subtilis RarA Acts as a Positive RecA Accessory Protein.</title>
        <authorList>
            <person name="Romero H."/>
            <person name="Serrano E."/>
            <person name="Hernandez-Tamayo R."/>
            <person name="Carrasco B."/>
            <person name="Cardenas P.P."/>
            <person name="Ayora S."/>
            <person name="Graumann P.L."/>
            <person name="Alonso J.C."/>
        </authorList>
    </citation>
    <scope>FUNCTION</scope>
    <scope>PROTEIN ABUNDANCE</scope>
    <scope>SUBCELLULAR LOCATION</scope>
    <scope>INDUCTION</scope>
    <scope>DISRUPTION PHENOTYPE</scope>
    <source>
        <strain>168 / YB886 / BG214</strain>
    </source>
</reference>
<reference key="15">
    <citation type="journal article" date="2020" name="Front. Mol. Biosci.">
        <title>Bacillus subtilis PcrA Couples DNA Replication, Transcription, Recombination and Segregation.</title>
        <authorList>
            <person name="Moreno-Del Alamo M."/>
            <person name="Torres R."/>
            <person name="Manfredi C."/>
            <person name="Ruiz-Maso J.A."/>
            <person name="Del Solar G."/>
            <person name="Alonso J.C."/>
        </authorList>
    </citation>
    <scope>DISRUPTION PHENOTYPE</scope>
    <source>
        <strain>168 / YB886 / BG214</strain>
    </source>
</reference>
<reference key="16">
    <citation type="journal article" date="2022" name="Nucleic Acids Res.">
        <title>The RecD2 helicase balances RecA activities.</title>
        <authorList>
            <person name="Ramos C."/>
            <person name="Hernandez-Tamayo R."/>
            <person name="Lopez-Sanz M."/>
            <person name="Carrasco B."/>
            <person name="Serrano E."/>
            <person name="Alonso J.C."/>
            <person name="Graumann P.L."/>
            <person name="Ayora S."/>
        </authorList>
    </citation>
    <scope>FUNCTION</scope>
    <scope>INTERACTION WITH RECD2</scope>
    <source>
        <strain>168 / YB886 / BG214</strain>
    </source>
</reference>
<accession>P16971</accession>
<protein>
    <recommendedName>
        <fullName evidence="1">Protein RecA</fullName>
    </recommendedName>
    <alternativeName>
        <fullName evidence="1">Recombinase A</fullName>
    </alternativeName>
</protein>
<sequence length="348" mass="38059">MSDRQAALDMALKQIEKQFGKGSIMKLGEKTDTRISTVPSGSLALDTALGIGGYPRGRIIEVYGPESSGKTTVALHAIAEVQQQGGQAAFIDAEHALDPVYAQKLGVNIEELLLSQPDTGEQALEIAEALVRSGAVDIVVVDSVAALVPKAEIEGDMGDSHVGLQARLMSQALRKLSGAINKSKTIAIFINQIREKVGVMFGNPETTPGGRALKFYSSVRLEVRRAEQLKQGNDVMGNKTKIKVVKNKVAPPFRTAEVDIMYGEGISKEGEIIDLGTELDIVQKSGSWYSYEEERLGQGRENAKQFLKENKDIMLMIQEQIREHYGLDNNGVVQQQAEETQEELEFEE</sequence>
<dbReference type="EMBL" id="X52132">
    <property type="protein sequence ID" value="CAA36377.1"/>
    <property type="molecule type" value="Genomic_DNA"/>
</dbReference>
<dbReference type="EMBL" id="AL009126">
    <property type="protein sequence ID" value="CAB13567.2"/>
    <property type="molecule type" value="Genomic_DNA"/>
</dbReference>
<dbReference type="EMBL" id="U87792">
    <property type="protein sequence ID" value="AAB47709.1"/>
    <property type="molecule type" value="Genomic_DNA"/>
</dbReference>
<dbReference type="EMBL" id="U56238">
    <property type="protein sequence ID" value="AAB00569.1"/>
    <property type="molecule type" value="Genomic_DNA"/>
</dbReference>
<dbReference type="PIR" id="S10370">
    <property type="entry name" value="RQBSEE"/>
</dbReference>
<dbReference type="RefSeq" id="NP_389576.2">
    <property type="nucleotide sequence ID" value="NC_000964.3"/>
</dbReference>
<dbReference type="RefSeq" id="WP_003245789.1">
    <property type="nucleotide sequence ID" value="NZ_OZ025638.1"/>
</dbReference>
<dbReference type="RefSeq" id="WP_009967282.1">
    <property type="nucleotide sequence ID" value="NZ_CM000487.1"/>
</dbReference>
<dbReference type="SMR" id="P16971"/>
<dbReference type="BioGRID" id="857087">
    <property type="interactions" value="1"/>
</dbReference>
<dbReference type="FunCoup" id="P16971">
    <property type="interactions" value="580"/>
</dbReference>
<dbReference type="IntAct" id="P16971">
    <property type="interactions" value="7"/>
</dbReference>
<dbReference type="MINT" id="P16971"/>
<dbReference type="STRING" id="224308.BSU16940"/>
<dbReference type="jPOST" id="P16971"/>
<dbReference type="PaxDb" id="224308-BSU16940"/>
<dbReference type="EnsemblBacteria" id="CAB13567">
    <property type="protein sequence ID" value="CAB13567"/>
    <property type="gene ID" value="BSU_16940"/>
</dbReference>
<dbReference type="GeneID" id="86873798"/>
<dbReference type="GeneID" id="939497"/>
<dbReference type="KEGG" id="bsu:BSU16940"/>
<dbReference type="PATRIC" id="fig|224308.179.peg.1835"/>
<dbReference type="eggNOG" id="COG0468">
    <property type="taxonomic scope" value="Bacteria"/>
</dbReference>
<dbReference type="InParanoid" id="P16971"/>
<dbReference type="OrthoDB" id="9776733at2"/>
<dbReference type="PhylomeDB" id="P16971"/>
<dbReference type="BioCyc" id="BSUB:BSU16940-MONOMER"/>
<dbReference type="Proteomes" id="UP000001570">
    <property type="component" value="Chromosome"/>
</dbReference>
<dbReference type="GO" id="GO:0005737">
    <property type="term" value="C:cytoplasm"/>
    <property type="evidence" value="ECO:0007669"/>
    <property type="project" value="UniProtKB-UniRule"/>
</dbReference>
<dbReference type="GO" id="GO:0009295">
    <property type="term" value="C:nucleoid"/>
    <property type="evidence" value="ECO:0007669"/>
    <property type="project" value="UniProtKB-SubCell"/>
</dbReference>
<dbReference type="GO" id="GO:0005524">
    <property type="term" value="F:ATP binding"/>
    <property type="evidence" value="ECO:0007669"/>
    <property type="project" value="UniProtKB-UniRule"/>
</dbReference>
<dbReference type="GO" id="GO:0016887">
    <property type="term" value="F:ATP hydrolysis activity"/>
    <property type="evidence" value="ECO:0007669"/>
    <property type="project" value="InterPro"/>
</dbReference>
<dbReference type="GO" id="GO:0140664">
    <property type="term" value="F:ATP-dependent DNA damage sensor activity"/>
    <property type="evidence" value="ECO:0007669"/>
    <property type="project" value="InterPro"/>
</dbReference>
<dbReference type="GO" id="GO:0003684">
    <property type="term" value="F:damaged DNA binding"/>
    <property type="evidence" value="ECO:0007669"/>
    <property type="project" value="UniProtKB-UniRule"/>
</dbReference>
<dbReference type="GO" id="GO:0003697">
    <property type="term" value="F:single-stranded DNA binding"/>
    <property type="evidence" value="ECO:0007669"/>
    <property type="project" value="UniProtKB-UniRule"/>
</dbReference>
<dbReference type="GO" id="GO:0006310">
    <property type="term" value="P:DNA recombination"/>
    <property type="evidence" value="ECO:0007669"/>
    <property type="project" value="UniProtKB-UniRule"/>
</dbReference>
<dbReference type="GO" id="GO:0006281">
    <property type="term" value="P:DNA repair"/>
    <property type="evidence" value="ECO:0007669"/>
    <property type="project" value="UniProtKB-UniRule"/>
</dbReference>
<dbReference type="GO" id="GO:0030420">
    <property type="term" value="P:establishment of competence for transformation"/>
    <property type="evidence" value="ECO:0007669"/>
    <property type="project" value="UniProtKB-KW"/>
</dbReference>
<dbReference type="GO" id="GO:0009432">
    <property type="term" value="P:SOS response"/>
    <property type="evidence" value="ECO:0007669"/>
    <property type="project" value="UniProtKB-UniRule"/>
</dbReference>
<dbReference type="CDD" id="cd00983">
    <property type="entry name" value="RecA"/>
    <property type="match status" value="1"/>
</dbReference>
<dbReference type="FunFam" id="3.40.50.300:FF:000087">
    <property type="entry name" value="Recombinase RecA"/>
    <property type="match status" value="1"/>
</dbReference>
<dbReference type="Gene3D" id="3.40.50.300">
    <property type="entry name" value="P-loop containing nucleotide triphosphate hydrolases"/>
    <property type="match status" value="1"/>
</dbReference>
<dbReference type="HAMAP" id="MF_00268">
    <property type="entry name" value="RecA"/>
    <property type="match status" value="1"/>
</dbReference>
<dbReference type="InterPro" id="IPR003593">
    <property type="entry name" value="AAA+_ATPase"/>
</dbReference>
<dbReference type="InterPro" id="IPR013765">
    <property type="entry name" value="DNA_recomb/repair_RecA"/>
</dbReference>
<dbReference type="InterPro" id="IPR020584">
    <property type="entry name" value="DNA_recomb/repair_RecA_CS"/>
</dbReference>
<dbReference type="InterPro" id="IPR027417">
    <property type="entry name" value="P-loop_NTPase"/>
</dbReference>
<dbReference type="InterPro" id="IPR049261">
    <property type="entry name" value="RecA-like_C"/>
</dbReference>
<dbReference type="InterPro" id="IPR049428">
    <property type="entry name" value="RecA-like_N"/>
</dbReference>
<dbReference type="InterPro" id="IPR020588">
    <property type="entry name" value="RecA_ATP-bd"/>
</dbReference>
<dbReference type="InterPro" id="IPR023400">
    <property type="entry name" value="RecA_C_sf"/>
</dbReference>
<dbReference type="InterPro" id="IPR020587">
    <property type="entry name" value="RecA_monomer-monomer_interface"/>
</dbReference>
<dbReference type="NCBIfam" id="TIGR02012">
    <property type="entry name" value="tigrfam_recA"/>
    <property type="match status" value="1"/>
</dbReference>
<dbReference type="PANTHER" id="PTHR45900:SF1">
    <property type="entry name" value="MITOCHONDRIAL DNA REPAIR PROTEIN RECA HOMOLOG-RELATED"/>
    <property type="match status" value="1"/>
</dbReference>
<dbReference type="PANTHER" id="PTHR45900">
    <property type="entry name" value="RECA"/>
    <property type="match status" value="1"/>
</dbReference>
<dbReference type="Pfam" id="PF00154">
    <property type="entry name" value="RecA"/>
    <property type="match status" value="1"/>
</dbReference>
<dbReference type="Pfam" id="PF21096">
    <property type="entry name" value="RecA_C"/>
    <property type="match status" value="1"/>
</dbReference>
<dbReference type="PRINTS" id="PR00142">
    <property type="entry name" value="RECA"/>
</dbReference>
<dbReference type="SMART" id="SM00382">
    <property type="entry name" value="AAA"/>
    <property type="match status" value="1"/>
</dbReference>
<dbReference type="SUPFAM" id="SSF52540">
    <property type="entry name" value="P-loop containing nucleoside triphosphate hydrolases"/>
    <property type="match status" value="1"/>
</dbReference>
<dbReference type="SUPFAM" id="SSF54752">
    <property type="entry name" value="RecA protein, C-terminal domain"/>
    <property type="match status" value="1"/>
</dbReference>
<dbReference type="PROSITE" id="PS00321">
    <property type="entry name" value="RECA_1"/>
    <property type="match status" value="1"/>
</dbReference>
<dbReference type="PROSITE" id="PS50162">
    <property type="entry name" value="RECA_2"/>
    <property type="match status" value="1"/>
</dbReference>
<dbReference type="PROSITE" id="PS50163">
    <property type="entry name" value="RECA_3"/>
    <property type="match status" value="1"/>
</dbReference>
<keyword id="KW-0067">ATP-binding</keyword>
<keyword id="KW-0178">Competence</keyword>
<keyword id="KW-0963">Cytoplasm</keyword>
<keyword id="KW-0227">DNA damage</keyword>
<keyword id="KW-0233">DNA recombination</keyword>
<keyword id="KW-0234">DNA repair</keyword>
<keyword id="KW-0238">DNA-binding</keyword>
<keyword id="KW-0547">Nucleotide-binding</keyword>
<keyword id="KW-1185">Reference proteome</keyword>
<keyword id="KW-0742">SOS response</keyword>
<organism>
    <name type="scientific">Bacillus subtilis (strain 168)</name>
    <dbReference type="NCBI Taxonomy" id="224308"/>
    <lineage>
        <taxon>Bacteria</taxon>
        <taxon>Bacillati</taxon>
        <taxon>Bacillota</taxon>
        <taxon>Bacilli</taxon>
        <taxon>Bacillales</taxon>
        <taxon>Bacillaceae</taxon>
        <taxon>Bacillus</taxon>
    </lineage>
</organism>
<gene>
    <name evidence="1 14" type="primary">recA</name>
    <name evidence="13" type="synonym">recE</name>
    <name type="ordered locus">BSU16940</name>
</gene>
<comment type="function">
    <text evidence="3 4 7 8 12 16">Multifunctional protein involved in homologous recombination, DNA repair and competence (PubMed:16061691, PubMed:16385024, PubMed:17803906, PubMed:18684995, PubMed:25138221). Can catalyze the hydrolysis of (d)ATP in the presence of single-stranded (ss)DNA; prefers dATP at least in vitro, catalyzes the dATP-dependent uptake of ssDNA by duplex DNA, and the dATP-dependent hybridization of homologous ssDNA (strand exchange) (PubMed:25138221). RecA-ATP cannot catalyze homologous DNA strand exchange; SsbA and DprA activate strand exchange by RecA-ATP (PubMed:25138221). It interacts with LexA causing its activation and leading to its autocatalytic cleavage. Hydrolysis of ATP in the presence of ssDNA is partially inhibited by RecU (PubMed:18684995). Required for DNA transformation; protects transforming DNA from degradation, possibly in combination with DprA (PubMed:17803906). Blocks replication of both leading and lagging strand DNA in the presence of RecO and SsbA; RecD2 is able to overcome this blockage (PubMed:35234892).</text>
</comment>
<comment type="function">
    <text evidence="3 4 10">Recruited to repair centers (RCs), foci that are the site of double-stranded DNA break(s), after RecN (PubMed:16061691). Concomitant with the appearance of RecO at the RCs, RecA forms threads that extend from RCs toward the opposite cell half, possibly searching for sequence homology along the sister chromosome. The threads disappear after about 2 hours (PubMed:16061691). Thread formation is absolutely dependent on RecJ or AadAB (PubMed:16385024). Thread formation is also dependent on RarA (PubMed:32117122).</text>
</comment>
<comment type="subunit">
    <text evidence="6 7 12">Monomer; forms higher-order oligomers (PubMed:16061691). Interacts with RecU (PubMed:18684995). Interacts with DprA (smf) (PubMed:17803906). Interacts with RecD2 (PubMed:35234892).</text>
</comment>
<comment type="interaction">
    <interactant intactId="EBI-1535844">
        <id>P16971</id>
    </interactant>
    <interactant intactId="EBI-1535559">
        <id>P39813</id>
        <label>dprA</label>
    </interactant>
    <organismsDiffer>false</organismsDiffer>
    <experiments>3</experiments>
</comment>
<comment type="interaction">
    <interactant intactId="EBI-1535844">
        <id>P16971</id>
    </interactant>
    <interactant intactId="EBI-9304781">
        <id>P37475</id>
        <label>spoIIE</label>
    </interactant>
    <organismsDiffer>false</organismsDiffer>
    <experiments>2</experiments>
</comment>
<comment type="interaction">
    <interactant intactId="EBI-1535844">
        <id>P16971</id>
    </interactant>
    <interactant intactId="EBI-9303331">
        <id>P37562</id>
        <label>yabT</label>
    </interactant>
    <organismsDiffer>false</organismsDiffer>
    <experiments>2</experiments>
</comment>
<comment type="interaction">
    <interactant intactId="EBI-1535844">
        <id>P16971</id>
    </interactant>
    <interactant intactId="EBI-9302918">
        <id>P96715</id>
        <label>ywqC</label>
    </interactant>
    <organismsDiffer>false</organismsDiffer>
    <experiments>3</experiments>
</comment>
<comment type="subcellular location">
    <subcellularLocation>
        <location evidence="3">Cytoplasm</location>
        <location evidence="3">Nucleoid</location>
    </subcellularLocation>
    <text evidence="3 5 10">Protein is diffuse with an occasional discrete spot in the absence of DNA damage (PubMed:32117122). Following H(2)O(2) treatment, RecA forms filamentous 'threads' in vivo which may correspond to in vivo RecA-ssDNA filaments (PubMed:32117122). 'Thread' formation is maximal by 40 minutes and then dissipates; in the absence of rarA very few 'threads' are formed (PubMed:32117122). Protein is recruited to RC foci following DNA damage (PubMed:16061691). During competence a number of proteins (at least CoiA, ComFA, ComGA, DprA, RecA and SsbB) are thought to colocalize at the cell pole (PubMed:17630974).</text>
</comment>
<comment type="developmental stage">
    <text evidence="2">Induced during competence (PubMed:11948146).</text>
</comment>
<comment type="induction">
    <text evidence="2 10">By competence, expression activated by ComK (PubMed:11948146). By DNA damage (at protein level) (PubMed:32117122).</text>
</comment>
<comment type="disruption phenotype">
    <text evidence="4 9 10 11">Cells lacking this gene are extremely sensitive to DNA-damaging agents mitomycin C, methyl methanesulfonate (MMS) and 4-nitroquinolone-1-oxide (4NQO) (PubMed:16385024). Double rarA-recA cells are much less viable than recA deletion strains and slightly more sensitive to H(2)O(2), MMS and 4NQO than single recA mutants (PubMed:30954900, PubMed:32117122). A recA deletion suppresses the lethality of pcrA DNA helicase depletion and increases survival of the strain in the presence of H(2)O(2) but not MMS (PubMed:32793628).</text>
</comment>
<comment type="miscellaneous">
    <text evidence="10">There are about 4800 RecA monomers per colony forming unit (CFU) in untreated, exponentially growing cells. Treatment with 0.6 uM mitomycin C fully derepresses RecA expression to a maximum of about 26,000 monomers/CFU.</text>
</comment>
<comment type="similarity">
    <text evidence="1">Belongs to the RecA family.</text>
</comment>